<feature type="chain" id="PRO_0000438144" description="Decoration protein gp12">
    <location>
        <begin position="1"/>
        <end position="64"/>
    </location>
</feature>
<feature type="region of interest" description="Disordered" evidence="1">
    <location>
        <begin position="1"/>
        <end position="40"/>
    </location>
</feature>
<feature type="compositionally biased region" description="Low complexity" evidence="1">
    <location>
        <begin position="15"/>
        <end position="40"/>
    </location>
</feature>
<reference key="1">
    <citation type="journal article" date="1997" name="J. Mol. Biol.">
        <title>Head morphogenesis genes of the Bacillus subtilis bacteriophage SPP1.</title>
        <authorList>
            <person name="Becker B."/>
            <person name="de la Fuente N."/>
            <person name="Gassel M."/>
            <person name="Guenther D."/>
            <person name="Tavares P."/>
            <person name="Lurz R."/>
            <person name="Trautner T.A."/>
            <person name="Alonso J.C."/>
        </authorList>
    </citation>
    <scope>NUCLEOTIDE SEQUENCE [GENOMIC DNA]</scope>
</reference>
<reference key="2">
    <citation type="journal article" date="1997" name="Gene">
        <title>The complete nucleotide sequence and functional organization of Bacillus subtilis bacteriophage SPP1.</title>
        <authorList>
            <person name="Alonso J.C."/>
            <person name="Luder G."/>
            <person name="Stiege A.C."/>
            <person name="Chai S."/>
            <person name="Weise F."/>
            <person name="Trautner T.A."/>
        </authorList>
    </citation>
    <scope>NUCLEOTIDE SEQUENCE [LARGE SCALE GENOMIC DNA]</scope>
</reference>
<reference key="3">
    <citation type="journal article" date="2012" name="J. Virol.">
        <title>Capsid structure and its stability at the late stages of bacteriophage SPP1 assembly.</title>
        <authorList>
            <person name="White H.E."/>
            <person name="Sherman M.B."/>
            <person name="Brasiles S."/>
            <person name="Jacquet E."/>
            <person name="Seavers P."/>
            <person name="Tavares P."/>
            <person name="Orlova E.V."/>
        </authorList>
    </citation>
    <scope>STRUCTURE BY ELECTRON MICROSCOPY (8.80 ANGSTROMS)</scope>
    <scope>FUNCTION</scope>
    <scope>SUBCELLULAR LOCATION</scope>
    <scope>INTERACTION WITH CAPSID PROTEIN GP13</scope>
</reference>
<proteinExistence type="evidence at protein level"/>
<keyword id="KW-1232">Capsid decoration protein</keyword>
<keyword id="KW-0167">Capsid protein</keyword>
<keyword id="KW-1185">Reference proteome</keyword>
<keyword id="KW-0946">Virion</keyword>
<accession>Q38581</accession>
<dbReference type="EMBL" id="X89721">
    <property type="protein sequence ID" value="CAA61869.1"/>
    <property type="molecule type" value="Genomic_DNA"/>
</dbReference>
<dbReference type="EMBL" id="X97918">
    <property type="protein sequence ID" value="CAA66591.1"/>
    <property type="molecule type" value="Genomic_DNA"/>
</dbReference>
<dbReference type="PIR" id="S58141">
    <property type="entry name" value="S58141"/>
</dbReference>
<dbReference type="RefSeq" id="NP_690673.1">
    <property type="nucleotide sequence ID" value="NC_004166.2"/>
</dbReference>
<dbReference type="SMR" id="Q38581"/>
<dbReference type="KEGG" id="vg:955295"/>
<dbReference type="Proteomes" id="UP000002559">
    <property type="component" value="Genome"/>
</dbReference>
<dbReference type="GO" id="GO:0098021">
    <property type="term" value="C:viral capsid, decoration"/>
    <property type="evidence" value="ECO:0000314"/>
    <property type="project" value="UniProtKB"/>
</dbReference>
<dbReference type="FunFam" id="1.20.5.320:FF:000020">
    <property type="entry name" value="Decoration protein gp12"/>
    <property type="match status" value="1"/>
</dbReference>
<dbReference type="Gene3D" id="1.20.5.320">
    <property type="entry name" value="6-Phosphogluconate Dehydrogenase, domain 3"/>
    <property type="match status" value="1"/>
</dbReference>
<sequence length="64" mass="6613">MSKRIPRFLRNIQLPAGPQGPKGDPGPKGDTGAKGADGFGTEAQYNDIISRLEALEQSSGGGTT</sequence>
<protein>
    <recommendedName>
        <fullName evidence="3">Decoration protein gp12</fullName>
    </recommendedName>
    <alternativeName>
        <fullName>Gene product 12</fullName>
        <shortName>gp12</shortName>
    </alternativeName>
</protein>
<organismHost>
    <name type="scientific">Bacillus subtilis</name>
    <dbReference type="NCBI Taxonomy" id="1423"/>
</organismHost>
<evidence type="ECO:0000256" key="1">
    <source>
        <dbReference type="SAM" id="MobiDB-lite"/>
    </source>
</evidence>
<evidence type="ECO:0000269" key="2">
    <source>
    </source>
</evidence>
<evidence type="ECO:0000305" key="3"/>
<evidence type="ECO:0000312" key="4">
    <source>
        <dbReference type="EMBL" id="CAA61869.1"/>
    </source>
</evidence>
<name>DECO_BPSPP</name>
<comment type="function">
    <text evidence="2">Decoration protein that binds to each capsid protein hexamer after capsid expansion and forms spikes at the surface of the capsid. Each of the 60 hexamers has three copies of the decoration protein gp12 in its center.</text>
</comment>
<comment type="subunit">
    <text evidence="2">Interacts with the capsid protein gp13.</text>
</comment>
<comment type="subcellular location">
    <subcellularLocation>
        <location evidence="2">Virion</location>
    </subcellularLocation>
    <text evidence="2">180 copies of the decoration protein are localized on the exterior of the capsid.</text>
</comment>
<gene>
    <name evidence="4" type="primary">12</name>
</gene>
<organism>
    <name type="scientific">Bacillus phage SPP1</name>
    <name type="common">Bacteriophage SPP1</name>
    <dbReference type="NCBI Taxonomy" id="10724"/>
    <lineage>
        <taxon>Viruses</taxon>
        <taxon>Duplodnaviria</taxon>
        <taxon>Heunggongvirae</taxon>
        <taxon>Uroviricota</taxon>
        <taxon>Caudoviricetes</taxon>
    </lineage>
</organism>